<name>VP8_VARV</name>
<organismHost>
    <name type="scientific">Homo sapiens</name>
    <name type="common">Human</name>
    <dbReference type="NCBI Taxonomy" id="9606"/>
</organismHost>
<keyword id="KW-1035">Host cytoplasm</keyword>
<keyword id="KW-0426">Late protein</keyword>
<keyword id="KW-0946">Virion</keyword>
<dbReference type="EMBL" id="L22579">
    <property type="protein sequence ID" value="AAA60824.1"/>
    <property type="molecule type" value="Genomic_DNA"/>
</dbReference>
<dbReference type="PIR" id="T28514">
    <property type="entry name" value="T28514"/>
</dbReference>
<dbReference type="KEGG" id="vg:1486473"/>
<dbReference type="Proteomes" id="UP000119805">
    <property type="component" value="Segment"/>
</dbReference>
<dbReference type="GO" id="GO:0030430">
    <property type="term" value="C:host cell cytoplasm"/>
    <property type="evidence" value="ECO:0007669"/>
    <property type="project" value="UniProtKB-SubCell"/>
</dbReference>
<dbReference type="GO" id="GO:0019028">
    <property type="term" value="C:viral capsid"/>
    <property type="evidence" value="ECO:0007669"/>
    <property type="project" value="InterPro"/>
</dbReference>
<dbReference type="GO" id="GO:0005198">
    <property type="term" value="F:structural molecule activity"/>
    <property type="evidence" value="ECO:0007669"/>
    <property type="project" value="InterPro"/>
</dbReference>
<dbReference type="InterPro" id="IPR007586">
    <property type="entry name" value="VP8_pox_nuc-bd"/>
</dbReference>
<dbReference type="Pfam" id="PF04498">
    <property type="entry name" value="Pox_VP8_L4R"/>
    <property type="match status" value="1"/>
</dbReference>
<accession>P0DSX0</accession>
<accession>P33039</accession>
<gene>
    <name type="primary">OPG098</name>
    <name type="ORF">L4R</name>
</gene>
<protein>
    <recommendedName>
        <fullName>Core protein VP8</fullName>
    </recommendedName>
    <alternativeName>
        <fullName>25 kDa major core protein</fullName>
    </alternativeName>
    <alternativeName>
        <fullName>L4 core protein</fullName>
    </alternativeName>
    <alternativeName>
        <fullName>P25K</fullName>
    </alternativeName>
</protein>
<evidence type="ECO:0000250" key="1">
    <source>
        <dbReference type="UniProtKB" id="P03295"/>
    </source>
</evidence>
<evidence type="ECO:0000305" key="2"/>
<organism>
    <name type="scientific">Variola virus</name>
    <dbReference type="NCBI Taxonomy" id="10255"/>
    <lineage>
        <taxon>Viruses</taxon>
        <taxon>Varidnaviria</taxon>
        <taxon>Bamfordvirae</taxon>
        <taxon>Nucleocytoviricota</taxon>
        <taxon>Pokkesviricetes</taxon>
        <taxon>Chitovirales</taxon>
        <taxon>Poxviridae</taxon>
        <taxon>Chordopoxvirinae</taxon>
        <taxon>Orthopoxvirus</taxon>
    </lineage>
</organism>
<comment type="function">
    <text evidence="1">Major core structural protein.</text>
</comment>
<comment type="subcellular location">
    <subcellularLocation>
        <location evidence="1">Virion</location>
    </subcellularLocation>
    <subcellularLocation>
        <location evidence="1">Host cytoplasm</location>
    </subcellularLocation>
    <text evidence="1">Localizes to the virion core.</text>
</comment>
<comment type="induction">
    <text>Expressed in the late phase of the viral replicative cycle.</text>
</comment>
<comment type="PTM">
    <text evidence="1">Undergoes morphogenesis-associated proteolysis which cleaves the 28 kDa to a 25-kDa product. Proteolytic cleavage of major core proteins P4a (OPG136), P4b (OPG129), and VP8 (OPG098), which occurs at a late stage of core formation, is required for production of infectious mature virions (MV).</text>
</comment>
<comment type="similarity">
    <text evidence="2">Belongs to the orthopoxvirus OPG098 family.</text>
</comment>
<reference key="1">
    <citation type="journal article" date="1993" name="Nature">
        <title>Potential virulence determinants in terminal regions of variola smallpox virus genome.</title>
        <authorList>
            <person name="Massung R.F."/>
            <person name="Esposito J.J."/>
            <person name="Liu L.I."/>
            <person name="Qi J."/>
            <person name="Utterback T.R."/>
            <person name="Knight J.C."/>
            <person name="Aubin L."/>
            <person name="Yuran T.E."/>
            <person name="Parsons J.M."/>
            <person name="Loparev V.N."/>
            <person name="Selivanov N.A."/>
            <person name="Cavallaro K.F."/>
            <person name="Kerlavage A.R."/>
            <person name="Mahy B.W.J."/>
            <person name="Venter J.C."/>
        </authorList>
    </citation>
    <scope>NUCLEOTIDE SEQUENCE [GENOMIC DNA]</scope>
    <source>
        <strain>Bangladesh-1975</strain>
    </source>
</reference>
<sequence>MSLLLENLIEEDTIFFAGSISEYDDLQMVIAGAKSKFPRSMLSIFNIVPRTMSKYELELIHNENITGAMFTTMYNIRNNLGLGDDKLTIEAIENYFLDPNNEVMPLIINNTDMTAVIPKKSGRRKNKNMVIFRQGSSPILCIFETRKKINIYKENMESASTEYTPIGDNKALISKYAGINVLNVYSPSTSMRLNAIYGFTNKNKLEKLSTNKELELYSSSPLQEPIRLNDFLGLLECVKKNIPLTDIPTKD</sequence>
<feature type="propeptide" id="PRO_0000448147" description="Removed by core protease OPG083/I7" evidence="1">
    <location>
        <begin position="1"/>
        <end position="32"/>
    </location>
</feature>
<feature type="chain" id="PRO_0000448148" description="Core protein VP8" evidence="1">
    <location>
        <begin position="33"/>
        <end position="251"/>
    </location>
</feature>
<feature type="site" description="Cleavage; by core protease OPG083" evidence="1">
    <location>
        <begin position="18"/>
        <end position="19"/>
    </location>
</feature>
<feature type="site" description="Cleavage; by core protease OPG083" evidence="1">
    <location>
        <begin position="32"/>
        <end position="33"/>
    </location>
</feature>
<proteinExistence type="evidence at transcript level"/>